<keyword id="KW-0963">Cytoplasm</keyword>
<keyword id="KW-0255">Endonuclease</keyword>
<keyword id="KW-0378">Hydrolase</keyword>
<keyword id="KW-0479">Metal-binding</keyword>
<keyword id="KW-0540">Nuclease</keyword>
<keyword id="KW-1185">Reference proteome</keyword>
<keyword id="KW-0690">Ribosome biogenesis</keyword>
<keyword id="KW-0698">rRNA processing</keyword>
<keyword id="KW-0862">Zinc</keyword>
<sequence>MDLELFDDDQLLDDKHHDLIKKLVAFCGKQLKLPENTEMSITLVGDDEIERINREYRETDRVTDVISFAIEEGEDDLPLLPGMAKNIGDLFIDPLTVRRHAEDYGHSFERELGYTVVHGFLHLNGYDHIKPEDEAVMIPLQKKILAAYGLTR</sequence>
<organism>
    <name type="scientific">Lacticaseibacillus paracasei (strain ATCC 334 / BCRC 17002 / CCUG 31169 / CIP 107868 / KCTC 3260 / NRRL B-441)</name>
    <name type="common">Lactobacillus paracasei</name>
    <dbReference type="NCBI Taxonomy" id="321967"/>
    <lineage>
        <taxon>Bacteria</taxon>
        <taxon>Bacillati</taxon>
        <taxon>Bacillota</taxon>
        <taxon>Bacilli</taxon>
        <taxon>Lactobacillales</taxon>
        <taxon>Lactobacillaceae</taxon>
        <taxon>Lacticaseibacillus</taxon>
    </lineage>
</organism>
<accession>Q038S9</accession>
<protein>
    <recommendedName>
        <fullName evidence="1">Endoribonuclease YbeY</fullName>
        <ecNumber evidence="1">3.1.-.-</ecNumber>
    </recommendedName>
</protein>
<reference key="1">
    <citation type="journal article" date="2006" name="Proc. Natl. Acad. Sci. U.S.A.">
        <title>Comparative genomics of the lactic acid bacteria.</title>
        <authorList>
            <person name="Makarova K.S."/>
            <person name="Slesarev A."/>
            <person name="Wolf Y.I."/>
            <person name="Sorokin A."/>
            <person name="Mirkin B."/>
            <person name="Koonin E.V."/>
            <person name="Pavlov A."/>
            <person name="Pavlova N."/>
            <person name="Karamychev V."/>
            <person name="Polouchine N."/>
            <person name="Shakhova V."/>
            <person name="Grigoriev I."/>
            <person name="Lou Y."/>
            <person name="Rohksar D."/>
            <person name="Lucas S."/>
            <person name="Huang K."/>
            <person name="Goodstein D.M."/>
            <person name="Hawkins T."/>
            <person name="Plengvidhya V."/>
            <person name="Welker D."/>
            <person name="Hughes J."/>
            <person name="Goh Y."/>
            <person name="Benson A."/>
            <person name="Baldwin K."/>
            <person name="Lee J.-H."/>
            <person name="Diaz-Muniz I."/>
            <person name="Dosti B."/>
            <person name="Smeianov V."/>
            <person name="Wechter W."/>
            <person name="Barabote R."/>
            <person name="Lorca G."/>
            <person name="Altermann E."/>
            <person name="Barrangou R."/>
            <person name="Ganesan B."/>
            <person name="Xie Y."/>
            <person name="Rawsthorne H."/>
            <person name="Tamir D."/>
            <person name="Parker C."/>
            <person name="Breidt F."/>
            <person name="Broadbent J.R."/>
            <person name="Hutkins R."/>
            <person name="O'Sullivan D."/>
            <person name="Steele J."/>
            <person name="Unlu G."/>
            <person name="Saier M.H. Jr."/>
            <person name="Klaenhammer T."/>
            <person name="Richardson P."/>
            <person name="Kozyavkin S."/>
            <person name="Weimer B.C."/>
            <person name="Mills D.A."/>
        </authorList>
    </citation>
    <scope>NUCLEOTIDE SEQUENCE [LARGE SCALE GENOMIC DNA]</scope>
    <source>
        <strain>ATCC 334 / BCRC 17002 / CCUG 31169 / CIP 107868 / KCTC 3260 / NRRL B-441</strain>
    </source>
</reference>
<proteinExistence type="inferred from homology"/>
<name>YBEY_LACP3</name>
<feature type="chain" id="PRO_0000284224" description="Endoribonuclease YbeY">
    <location>
        <begin position="1"/>
        <end position="152"/>
    </location>
</feature>
<feature type="binding site" evidence="1">
    <location>
        <position position="118"/>
    </location>
    <ligand>
        <name>Zn(2+)</name>
        <dbReference type="ChEBI" id="CHEBI:29105"/>
        <note>catalytic</note>
    </ligand>
</feature>
<feature type="binding site" evidence="1">
    <location>
        <position position="122"/>
    </location>
    <ligand>
        <name>Zn(2+)</name>
        <dbReference type="ChEBI" id="CHEBI:29105"/>
        <note>catalytic</note>
    </ligand>
</feature>
<feature type="binding site" evidence="1">
    <location>
        <position position="128"/>
    </location>
    <ligand>
        <name>Zn(2+)</name>
        <dbReference type="ChEBI" id="CHEBI:29105"/>
        <note>catalytic</note>
    </ligand>
</feature>
<dbReference type="EC" id="3.1.-.-" evidence="1"/>
<dbReference type="EMBL" id="CP000423">
    <property type="protein sequence ID" value="ABJ70293.1"/>
    <property type="molecule type" value="Genomic_DNA"/>
</dbReference>
<dbReference type="RefSeq" id="WP_003565667.1">
    <property type="nucleotide sequence ID" value="NC_008526.1"/>
</dbReference>
<dbReference type="RefSeq" id="YP_806735.1">
    <property type="nucleotide sequence ID" value="NC_008526.1"/>
</dbReference>
<dbReference type="SMR" id="Q038S9"/>
<dbReference type="STRING" id="321967.LSEI_1518"/>
<dbReference type="PaxDb" id="321967-LSEI_1518"/>
<dbReference type="GeneID" id="57090175"/>
<dbReference type="KEGG" id="lca:LSEI_1518"/>
<dbReference type="PATRIC" id="fig|321967.11.peg.1500"/>
<dbReference type="HOGENOM" id="CLU_106710_3_0_9"/>
<dbReference type="Proteomes" id="UP000001651">
    <property type="component" value="Chromosome"/>
</dbReference>
<dbReference type="GO" id="GO:0005737">
    <property type="term" value="C:cytoplasm"/>
    <property type="evidence" value="ECO:0007669"/>
    <property type="project" value="UniProtKB-SubCell"/>
</dbReference>
<dbReference type="GO" id="GO:0004222">
    <property type="term" value="F:metalloendopeptidase activity"/>
    <property type="evidence" value="ECO:0007669"/>
    <property type="project" value="InterPro"/>
</dbReference>
<dbReference type="GO" id="GO:0004521">
    <property type="term" value="F:RNA endonuclease activity"/>
    <property type="evidence" value="ECO:0007669"/>
    <property type="project" value="UniProtKB-UniRule"/>
</dbReference>
<dbReference type="GO" id="GO:0008270">
    <property type="term" value="F:zinc ion binding"/>
    <property type="evidence" value="ECO:0007669"/>
    <property type="project" value="UniProtKB-UniRule"/>
</dbReference>
<dbReference type="GO" id="GO:0006364">
    <property type="term" value="P:rRNA processing"/>
    <property type="evidence" value="ECO:0007669"/>
    <property type="project" value="UniProtKB-UniRule"/>
</dbReference>
<dbReference type="Gene3D" id="3.40.390.30">
    <property type="entry name" value="Metalloproteases ('zincins'), catalytic domain"/>
    <property type="match status" value="1"/>
</dbReference>
<dbReference type="HAMAP" id="MF_00009">
    <property type="entry name" value="Endoribonucl_YbeY"/>
    <property type="match status" value="1"/>
</dbReference>
<dbReference type="InterPro" id="IPR023091">
    <property type="entry name" value="MetalPrtase_cat_dom_sf_prd"/>
</dbReference>
<dbReference type="InterPro" id="IPR002036">
    <property type="entry name" value="YbeY"/>
</dbReference>
<dbReference type="InterPro" id="IPR020549">
    <property type="entry name" value="YbeY_CS"/>
</dbReference>
<dbReference type="NCBIfam" id="TIGR00043">
    <property type="entry name" value="rRNA maturation RNase YbeY"/>
    <property type="match status" value="1"/>
</dbReference>
<dbReference type="PANTHER" id="PTHR46986">
    <property type="entry name" value="ENDORIBONUCLEASE YBEY, CHLOROPLASTIC"/>
    <property type="match status" value="1"/>
</dbReference>
<dbReference type="PANTHER" id="PTHR46986:SF1">
    <property type="entry name" value="ENDORIBONUCLEASE YBEY, CHLOROPLASTIC"/>
    <property type="match status" value="1"/>
</dbReference>
<dbReference type="Pfam" id="PF02130">
    <property type="entry name" value="YbeY"/>
    <property type="match status" value="1"/>
</dbReference>
<dbReference type="SUPFAM" id="SSF55486">
    <property type="entry name" value="Metalloproteases ('zincins'), catalytic domain"/>
    <property type="match status" value="1"/>
</dbReference>
<dbReference type="PROSITE" id="PS01306">
    <property type="entry name" value="UPF0054"/>
    <property type="match status" value="1"/>
</dbReference>
<gene>
    <name evidence="1" type="primary">ybeY</name>
    <name type="ordered locus">LSEI_1518</name>
</gene>
<comment type="function">
    <text evidence="1">Single strand-specific metallo-endoribonuclease involved in late-stage 70S ribosome quality control and in maturation of the 3' terminus of the 16S rRNA.</text>
</comment>
<comment type="cofactor">
    <cofactor evidence="1">
        <name>Zn(2+)</name>
        <dbReference type="ChEBI" id="CHEBI:29105"/>
    </cofactor>
    <text evidence="1">Binds 1 zinc ion.</text>
</comment>
<comment type="subcellular location">
    <subcellularLocation>
        <location evidence="1">Cytoplasm</location>
    </subcellularLocation>
</comment>
<comment type="similarity">
    <text evidence="1">Belongs to the endoribonuclease YbeY family.</text>
</comment>
<evidence type="ECO:0000255" key="1">
    <source>
        <dbReference type="HAMAP-Rule" id="MF_00009"/>
    </source>
</evidence>